<keyword id="KW-0963">Cytoplasm</keyword>
<keyword id="KW-0448">Lipopolysaccharide biosynthesis</keyword>
<keyword id="KW-0548">Nucleotidyltransferase</keyword>
<keyword id="KW-0808">Transferase</keyword>
<comment type="function">
    <text evidence="1">Activates KDO (a required 8-carbon sugar) for incorporation into bacterial lipopolysaccharide in Gram-negative bacteria.</text>
</comment>
<comment type="catalytic activity">
    <reaction evidence="1">
        <text>3-deoxy-alpha-D-manno-oct-2-ulosonate + CTP = CMP-3-deoxy-beta-D-manno-octulosonate + diphosphate</text>
        <dbReference type="Rhea" id="RHEA:23448"/>
        <dbReference type="ChEBI" id="CHEBI:33019"/>
        <dbReference type="ChEBI" id="CHEBI:37563"/>
        <dbReference type="ChEBI" id="CHEBI:85986"/>
        <dbReference type="ChEBI" id="CHEBI:85987"/>
        <dbReference type="EC" id="2.7.7.38"/>
    </reaction>
</comment>
<comment type="pathway">
    <text evidence="1">Nucleotide-sugar biosynthesis; CMP-3-deoxy-D-manno-octulosonate biosynthesis; CMP-3-deoxy-D-manno-octulosonate from 3-deoxy-D-manno-octulosonate and CTP: step 1/1.</text>
</comment>
<comment type="pathway">
    <text evidence="1">Bacterial outer membrane biogenesis; lipopolysaccharide biosynthesis.</text>
</comment>
<comment type="subcellular location">
    <subcellularLocation>
        <location evidence="1">Cytoplasm</location>
    </subcellularLocation>
</comment>
<comment type="similarity">
    <text evidence="1">Belongs to the KdsB family.</text>
</comment>
<evidence type="ECO:0000255" key="1">
    <source>
        <dbReference type="HAMAP-Rule" id="MF_00057"/>
    </source>
</evidence>
<organism>
    <name type="scientific">Salmonella agona (strain SL483)</name>
    <dbReference type="NCBI Taxonomy" id="454166"/>
    <lineage>
        <taxon>Bacteria</taxon>
        <taxon>Pseudomonadati</taxon>
        <taxon>Pseudomonadota</taxon>
        <taxon>Gammaproteobacteria</taxon>
        <taxon>Enterobacterales</taxon>
        <taxon>Enterobacteriaceae</taxon>
        <taxon>Salmonella</taxon>
    </lineage>
</organism>
<gene>
    <name evidence="1" type="primary">kdsB</name>
    <name type="ordered locus">SeAg_B0994</name>
</gene>
<proteinExistence type="inferred from homology"/>
<sequence length="248" mass="27432">MSFVVIIPARFSSTRLPGKPLVDINGKPMIVHVLERARESGAERIIVATDHEDVARAVEAAGGEVCMTRADHQSGTERLAEVVEKCGFSDDTVIVNVQGDEPMIPAVIIRQVAENLAQRQVGMATLAVPIHSAEEAFNPNAVKVVLDAEGYALYFSRATIPWDRDRFAKSLETVGDTCLRHLGIYGYRAGFIRRYVSWQPSPLEHIEMLEQLRVLWYGEKIHVAVAKAVPGTGVDTADDLERVRAEMR</sequence>
<name>KDSB_SALA4</name>
<feature type="chain" id="PRO_1000091899" description="3-deoxy-manno-octulosonate cytidylyltransferase">
    <location>
        <begin position="1"/>
        <end position="248"/>
    </location>
</feature>
<dbReference type="EC" id="2.7.7.38" evidence="1"/>
<dbReference type="EMBL" id="CP001138">
    <property type="protein sequence ID" value="ACH48544.1"/>
    <property type="molecule type" value="Genomic_DNA"/>
</dbReference>
<dbReference type="RefSeq" id="WP_000011576.1">
    <property type="nucleotide sequence ID" value="NC_011149.1"/>
</dbReference>
<dbReference type="SMR" id="B5F1S0"/>
<dbReference type="KEGG" id="sea:SeAg_B0994"/>
<dbReference type="HOGENOM" id="CLU_065038_1_0_6"/>
<dbReference type="UniPathway" id="UPA00030"/>
<dbReference type="UniPathway" id="UPA00358">
    <property type="reaction ID" value="UER00476"/>
</dbReference>
<dbReference type="Proteomes" id="UP000008819">
    <property type="component" value="Chromosome"/>
</dbReference>
<dbReference type="GO" id="GO:0005829">
    <property type="term" value="C:cytosol"/>
    <property type="evidence" value="ECO:0007669"/>
    <property type="project" value="TreeGrafter"/>
</dbReference>
<dbReference type="GO" id="GO:0008690">
    <property type="term" value="F:3-deoxy-manno-octulosonate cytidylyltransferase activity"/>
    <property type="evidence" value="ECO:0007669"/>
    <property type="project" value="UniProtKB-UniRule"/>
</dbReference>
<dbReference type="GO" id="GO:0033468">
    <property type="term" value="P:CMP-keto-3-deoxy-D-manno-octulosonic acid biosynthetic process"/>
    <property type="evidence" value="ECO:0007669"/>
    <property type="project" value="UniProtKB-UniRule"/>
</dbReference>
<dbReference type="GO" id="GO:0009103">
    <property type="term" value="P:lipopolysaccharide biosynthetic process"/>
    <property type="evidence" value="ECO:0007669"/>
    <property type="project" value="UniProtKB-UniRule"/>
</dbReference>
<dbReference type="CDD" id="cd02517">
    <property type="entry name" value="CMP-KDO-Synthetase"/>
    <property type="match status" value="1"/>
</dbReference>
<dbReference type="FunFam" id="3.90.550.10:FF:000011">
    <property type="entry name" value="3-deoxy-manno-octulosonate cytidylyltransferase"/>
    <property type="match status" value="1"/>
</dbReference>
<dbReference type="Gene3D" id="3.90.550.10">
    <property type="entry name" value="Spore Coat Polysaccharide Biosynthesis Protein SpsA, Chain A"/>
    <property type="match status" value="1"/>
</dbReference>
<dbReference type="HAMAP" id="MF_00057">
    <property type="entry name" value="KdsB"/>
    <property type="match status" value="1"/>
</dbReference>
<dbReference type="InterPro" id="IPR003329">
    <property type="entry name" value="Cytidylyl_trans"/>
</dbReference>
<dbReference type="InterPro" id="IPR004528">
    <property type="entry name" value="KdsB"/>
</dbReference>
<dbReference type="InterPro" id="IPR029044">
    <property type="entry name" value="Nucleotide-diphossugar_trans"/>
</dbReference>
<dbReference type="NCBIfam" id="TIGR00466">
    <property type="entry name" value="kdsB"/>
    <property type="match status" value="1"/>
</dbReference>
<dbReference type="NCBIfam" id="NF003950">
    <property type="entry name" value="PRK05450.1-3"/>
    <property type="match status" value="1"/>
</dbReference>
<dbReference type="NCBIfam" id="NF003952">
    <property type="entry name" value="PRK05450.1-5"/>
    <property type="match status" value="1"/>
</dbReference>
<dbReference type="NCBIfam" id="NF009905">
    <property type="entry name" value="PRK13368.1"/>
    <property type="match status" value="1"/>
</dbReference>
<dbReference type="PANTHER" id="PTHR42866">
    <property type="entry name" value="3-DEOXY-MANNO-OCTULOSONATE CYTIDYLYLTRANSFERASE"/>
    <property type="match status" value="1"/>
</dbReference>
<dbReference type="PANTHER" id="PTHR42866:SF2">
    <property type="entry name" value="3-DEOXY-MANNO-OCTULOSONATE CYTIDYLYLTRANSFERASE, MITOCHONDRIAL"/>
    <property type="match status" value="1"/>
</dbReference>
<dbReference type="Pfam" id="PF02348">
    <property type="entry name" value="CTP_transf_3"/>
    <property type="match status" value="1"/>
</dbReference>
<dbReference type="SUPFAM" id="SSF53448">
    <property type="entry name" value="Nucleotide-diphospho-sugar transferases"/>
    <property type="match status" value="1"/>
</dbReference>
<reference key="1">
    <citation type="journal article" date="2011" name="J. Bacteriol.">
        <title>Comparative genomics of 28 Salmonella enterica isolates: evidence for CRISPR-mediated adaptive sublineage evolution.</title>
        <authorList>
            <person name="Fricke W.F."/>
            <person name="Mammel M.K."/>
            <person name="McDermott P.F."/>
            <person name="Tartera C."/>
            <person name="White D.G."/>
            <person name="Leclerc J.E."/>
            <person name="Ravel J."/>
            <person name="Cebula T.A."/>
        </authorList>
    </citation>
    <scope>NUCLEOTIDE SEQUENCE [LARGE SCALE GENOMIC DNA]</scope>
    <source>
        <strain>SL483</strain>
    </source>
</reference>
<accession>B5F1S0</accession>
<protein>
    <recommendedName>
        <fullName evidence="1">3-deoxy-manno-octulosonate cytidylyltransferase</fullName>
        <ecNumber evidence="1">2.7.7.38</ecNumber>
    </recommendedName>
    <alternativeName>
        <fullName evidence="1">CMP-2-keto-3-deoxyoctulosonic acid synthase</fullName>
        <shortName evidence="1">CKS</shortName>
        <shortName evidence="1">CMP-KDO synthase</shortName>
    </alternativeName>
</protein>